<reference key="1">
    <citation type="journal article" date="1988" name="J. Biol. Chem.">
        <title>Cloning and expression of a cDNA for human thioredoxin.</title>
        <authorList>
            <person name="Wollman E.E."/>
            <person name="D'Auriol L."/>
            <person name="Rimsky L."/>
            <person name="Shaw A."/>
            <person name="Jacquot J.-P."/>
            <person name="Wingfield P."/>
            <person name="Graber P."/>
            <person name="Dessarps F."/>
        </authorList>
    </citation>
    <scope>NUCLEOTIDE SEQUENCE [MRNA] (ISOFORM 1)</scope>
</reference>
<reference key="2">
    <citation type="journal article" date="1989" name="EMBO J.">
        <title>ATL-derived factor (ADF), an IL-2 receptor/Tac inducer homologous to thioredoxin; possible involvement of dithiol-reduction in the IL-2 receptor induction.</title>
        <authorList>
            <person name="Tagaya Y."/>
            <person name="Maeda Y."/>
            <person name="Mitsui A."/>
            <person name="Kndo N."/>
            <person name="Matsui H."/>
            <person name="Hamuro J."/>
            <person name="Brown N."/>
            <person name="Arai K."/>
            <person name="Yokota T."/>
            <person name="Wakasugi H."/>
            <person name="Yodoi J."/>
        </authorList>
    </citation>
    <scope>NUCLEOTIDE SEQUENCE [MRNA] (ISOFORM 1)</scope>
</reference>
<reference key="3">
    <citation type="journal article" date="1991" name="Gene">
        <title>Isolation and characterization of human thioredoxin-encoding genes.</title>
        <authorList>
            <person name="Tonissen K.F."/>
            <person name="Wells J.R.E."/>
        </authorList>
    </citation>
    <scope>NUCLEOTIDE SEQUENCE [GENOMIC DNA]</scope>
</reference>
<reference key="4">
    <citation type="submission" date="2000-06" db="EMBL/GenBank/DDBJ databases">
        <authorList>
            <person name="Reddy P.G."/>
            <person name="Bhuyan D.K."/>
            <person name="Bhuyan K.C."/>
        </authorList>
    </citation>
    <scope>NUCLEOTIDE SEQUENCE [MRNA] (ISOFORM 1)</scope>
    <source>
        <tissue>Lens</tissue>
    </source>
</reference>
<reference key="5">
    <citation type="submission" date="2000-07" db="EMBL/GenBank/DDBJ databases">
        <title>Cloning, purification and characterization of human lens thioredoxin.</title>
        <authorList>
            <person name="Liu A."/>
            <person name="Lou M.F."/>
        </authorList>
    </citation>
    <scope>NUCLEOTIDE SEQUENCE [MRNA] (ISOFORM 1)</scope>
    <source>
        <tissue>Lens</tissue>
    </source>
</reference>
<reference key="6">
    <citation type="submission" date="2000-10" db="EMBL/GenBank/DDBJ databases">
        <title>Cloning and sequencing of thioredoxin cDNA from human brain.</title>
        <authorList>
            <person name="Xu J.Y."/>
            <person name="Xu L."/>
            <person name="Li K.S."/>
            <person name="Dai R."/>
        </authorList>
    </citation>
    <scope>NUCLEOTIDE SEQUENCE [MRNA] (ISOFORM 1)</scope>
    <source>
        <tissue>Brain</tissue>
    </source>
</reference>
<reference key="7">
    <citation type="journal article" date="2004" name="Nat. Genet.">
        <title>Complete sequencing and characterization of 21,243 full-length human cDNAs.</title>
        <authorList>
            <person name="Ota T."/>
            <person name="Suzuki Y."/>
            <person name="Nishikawa T."/>
            <person name="Otsuki T."/>
            <person name="Sugiyama T."/>
            <person name="Irie R."/>
            <person name="Wakamatsu A."/>
            <person name="Hayashi K."/>
            <person name="Sato H."/>
            <person name="Nagai K."/>
            <person name="Kimura K."/>
            <person name="Makita H."/>
            <person name="Sekine M."/>
            <person name="Obayashi M."/>
            <person name="Nishi T."/>
            <person name="Shibahara T."/>
            <person name="Tanaka T."/>
            <person name="Ishii S."/>
            <person name="Yamamoto J."/>
            <person name="Saito K."/>
            <person name="Kawai Y."/>
            <person name="Isono Y."/>
            <person name="Nakamura Y."/>
            <person name="Nagahari K."/>
            <person name="Murakami K."/>
            <person name="Yasuda T."/>
            <person name="Iwayanagi T."/>
            <person name="Wagatsuma M."/>
            <person name="Shiratori A."/>
            <person name="Sudo H."/>
            <person name="Hosoiri T."/>
            <person name="Kaku Y."/>
            <person name="Kodaira H."/>
            <person name="Kondo H."/>
            <person name="Sugawara M."/>
            <person name="Takahashi M."/>
            <person name="Kanda K."/>
            <person name="Yokoi T."/>
            <person name="Furuya T."/>
            <person name="Kikkawa E."/>
            <person name="Omura Y."/>
            <person name="Abe K."/>
            <person name="Kamihara K."/>
            <person name="Katsuta N."/>
            <person name="Sato K."/>
            <person name="Tanikawa M."/>
            <person name="Yamazaki M."/>
            <person name="Ninomiya K."/>
            <person name="Ishibashi T."/>
            <person name="Yamashita H."/>
            <person name="Murakawa K."/>
            <person name="Fujimori K."/>
            <person name="Tanai H."/>
            <person name="Kimata M."/>
            <person name="Watanabe M."/>
            <person name="Hiraoka S."/>
            <person name="Chiba Y."/>
            <person name="Ishida S."/>
            <person name="Ono Y."/>
            <person name="Takiguchi S."/>
            <person name="Watanabe S."/>
            <person name="Yosida M."/>
            <person name="Hotuta T."/>
            <person name="Kusano J."/>
            <person name="Kanehori K."/>
            <person name="Takahashi-Fujii A."/>
            <person name="Hara H."/>
            <person name="Tanase T.-O."/>
            <person name="Nomura Y."/>
            <person name="Togiya S."/>
            <person name="Komai F."/>
            <person name="Hara R."/>
            <person name="Takeuchi K."/>
            <person name="Arita M."/>
            <person name="Imose N."/>
            <person name="Musashino K."/>
            <person name="Yuuki H."/>
            <person name="Oshima A."/>
            <person name="Sasaki N."/>
            <person name="Aotsuka S."/>
            <person name="Yoshikawa Y."/>
            <person name="Matsunawa H."/>
            <person name="Ichihara T."/>
            <person name="Shiohata N."/>
            <person name="Sano S."/>
            <person name="Moriya S."/>
            <person name="Momiyama H."/>
            <person name="Satoh N."/>
            <person name="Takami S."/>
            <person name="Terashima Y."/>
            <person name="Suzuki O."/>
            <person name="Nakagawa S."/>
            <person name="Senoh A."/>
            <person name="Mizoguchi H."/>
            <person name="Goto Y."/>
            <person name="Shimizu F."/>
            <person name="Wakebe H."/>
            <person name="Hishigaki H."/>
            <person name="Watanabe T."/>
            <person name="Sugiyama A."/>
            <person name="Takemoto M."/>
            <person name="Kawakami B."/>
            <person name="Yamazaki M."/>
            <person name="Watanabe K."/>
            <person name="Kumagai A."/>
            <person name="Itakura S."/>
            <person name="Fukuzumi Y."/>
            <person name="Fujimori Y."/>
            <person name="Komiyama M."/>
            <person name="Tashiro H."/>
            <person name="Tanigami A."/>
            <person name="Fujiwara T."/>
            <person name="Ono T."/>
            <person name="Yamada K."/>
            <person name="Fujii Y."/>
            <person name="Ozaki K."/>
            <person name="Hirao M."/>
            <person name="Ohmori Y."/>
            <person name="Kawabata A."/>
            <person name="Hikiji T."/>
            <person name="Kobatake N."/>
            <person name="Inagaki H."/>
            <person name="Ikema Y."/>
            <person name="Okamoto S."/>
            <person name="Okitani R."/>
            <person name="Kawakami T."/>
            <person name="Noguchi S."/>
            <person name="Itoh T."/>
            <person name="Shigeta K."/>
            <person name="Senba T."/>
            <person name="Matsumura K."/>
            <person name="Nakajima Y."/>
            <person name="Mizuno T."/>
            <person name="Morinaga M."/>
            <person name="Sasaki M."/>
            <person name="Togashi T."/>
            <person name="Oyama M."/>
            <person name="Hata H."/>
            <person name="Watanabe M."/>
            <person name="Komatsu T."/>
            <person name="Mizushima-Sugano J."/>
            <person name="Satoh T."/>
            <person name="Shirai Y."/>
            <person name="Takahashi Y."/>
            <person name="Nakagawa K."/>
            <person name="Okumura K."/>
            <person name="Nagase T."/>
            <person name="Nomura N."/>
            <person name="Kikuchi H."/>
            <person name="Masuho Y."/>
            <person name="Yamashita R."/>
            <person name="Nakai K."/>
            <person name="Yada T."/>
            <person name="Nakamura Y."/>
            <person name="Ohara O."/>
            <person name="Isogai T."/>
            <person name="Sugano S."/>
        </authorList>
    </citation>
    <scope>NUCLEOTIDE SEQUENCE [LARGE SCALE MRNA] (ISOFORM 1)</scope>
    <source>
        <tissue>Cerebellum</tissue>
    </source>
</reference>
<reference key="8">
    <citation type="submission" date="2004-05" db="EMBL/GenBank/DDBJ databases">
        <title>Cloning of human full open reading frames in Gateway(TM) system entry vector (pDONR201).</title>
        <authorList>
            <person name="Ebert L."/>
            <person name="Schick M."/>
            <person name="Neubert P."/>
            <person name="Schatten R."/>
            <person name="Henze S."/>
            <person name="Korn B."/>
        </authorList>
    </citation>
    <scope>NUCLEOTIDE SEQUENCE [LARGE SCALE MRNA] (ISOFORM 1)</scope>
</reference>
<reference key="9">
    <citation type="submission" date="2002-09" db="EMBL/GenBank/DDBJ databases">
        <authorList>
            <consortium name="NIEHS SNPs program"/>
        </authorList>
    </citation>
    <scope>NUCLEOTIDE SEQUENCE [GENOMIC DNA]</scope>
</reference>
<reference key="10">
    <citation type="journal article" date="2004" name="Nature">
        <title>DNA sequence and analysis of human chromosome 9.</title>
        <authorList>
            <person name="Humphray S.J."/>
            <person name="Oliver K."/>
            <person name="Hunt A.R."/>
            <person name="Plumb R.W."/>
            <person name="Loveland J.E."/>
            <person name="Howe K.L."/>
            <person name="Andrews T.D."/>
            <person name="Searle S."/>
            <person name="Hunt S.E."/>
            <person name="Scott C.E."/>
            <person name="Jones M.C."/>
            <person name="Ainscough R."/>
            <person name="Almeida J.P."/>
            <person name="Ambrose K.D."/>
            <person name="Ashwell R.I.S."/>
            <person name="Babbage A.K."/>
            <person name="Babbage S."/>
            <person name="Bagguley C.L."/>
            <person name="Bailey J."/>
            <person name="Banerjee R."/>
            <person name="Barker D.J."/>
            <person name="Barlow K.F."/>
            <person name="Bates K."/>
            <person name="Beasley H."/>
            <person name="Beasley O."/>
            <person name="Bird C.P."/>
            <person name="Bray-Allen S."/>
            <person name="Brown A.J."/>
            <person name="Brown J.Y."/>
            <person name="Burford D."/>
            <person name="Burrill W."/>
            <person name="Burton J."/>
            <person name="Carder C."/>
            <person name="Carter N.P."/>
            <person name="Chapman J.C."/>
            <person name="Chen Y."/>
            <person name="Clarke G."/>
            <person name="Clark S.Y."/>
            <person name="Clee C.M."/>
            <person name="Clegg S."/>
            <person name="Collier R.E."/>
            <person name="Corby N."/>
            <person name="Crosier M."/>
            <person name="Cummings A.T."/>
            <person name="Davies J."/>
            <person name="Dhami P."/>
            <person name="Dunn M."/>
            <person name="Dutta I."/>
            <person name="Dyer L.W."/>
            <person name="Earthrowl M.E."/>
            <person name="Faulkner L."/>
            <person name="Fleming C.J."/>
            <person name="Frankish A."/>
            <person name="Frankland J.A."/>
            <person name="French L."/>
            <person name="Fricker D.G."/>
            <person name="Garner P."/>
            <person name="Garnett J."/>
            <person name="Ghori J."/>
            <person name="Gilbert J.G.R."/>
            <person name="Glison C."/>
            <person name="Grafham D.V."/>
            <person name="Gribble S."/>
            <person name="Griffiths C."/>
            <person name="Griffiths-Jones S."/>
            <person name="Grocock R."/>
            <person name="Guy J."/>
            <person name="Hall R.E."/>
            <person name="Hammond S."/>
            <person name="Harley J.L."/>
            <person name="Harrison E.S.I."/>
            <person name="Hart E.A."/>
            <person name="Heath P.D."/>
            <person name="Henderson C.D."/>
            <person name="Hopkins B.L."/>
            <person name="Howard P.J."/>
            <person name="Howden P.J."/>
            <person name="Huckle E."/>
            <person name="Johnson C."/>
            <person name="Johnson D."/>
            <person name="Joy A.A."/>
            <person name="Kay M."/>
            <person name="Keenan S."/>
            <person name="Kershaw J.K."/>
            <person name="Kimberley A.M."/>
            <person name="King A."/>
            <person name="Knights A."/>
            <person name="Laird G.K."/>
            <person name="Langford C."/>
            <person name="Lawlor S."/>
            <person name="Leongamornlert D.A."/>
            <person name="Leversha M."/>
            <person name="Lloyd C."/>
            <person name="Lloyd D.M."/>
            <person name="Lovell J."/>
            <person name="Martin S."/>
            <person name="Mashreghi-Mohammadi M."/>
            <person name="Matthews L."/>
            <person name="McLaren S."/>
            <person name="McLay K.E."/>
            <person name="McMurray A."/>
            <person name="Milne S."/>
            <person name="Nickerson T."/>
            <person name="Nisbett J."/>
            <person name="Nordsiek G."/>
            <person name="Pearce A.V."/>
            <person name="Peck A.I."/>
            <person name="Porter K.M."/>
            <person name="Pandian R."/>
            <person name="Pelan S."/>
            <person name="Phillimore B."/>
            <person name="Povey S."/>
            <person name="Ramsey Y."/>
            <person name="Rand V."/>
            <person name="Scharfe M."/>
            <person name="Sehra H.K."/>
            <person name="Shownkeen R."/>
            <person name="Sims S.K."/>
            <person name="Skuce C.D."/>
            <person name="Smith M."/>
            <person name="Steward C.A."/>
            <person name="Swarbreck D."/>
            <person name="Sycamore N."/>
            <person name="Tester J."/>
            <person name="Thorpe A."/>
            <person name="Tracey A."/>
            <person name="Tromans A."/>
            <person name="Thomas D.W."/>
            <person name="Wall M."/>
            <person name="Wallis J.M."/>
            <person name="West A.P."/>
            <person name="Whitehead S.L."/>
            <person name="Willey D.L."/>
            <person name="Williams S.A."/>
            <person name="Wilming L."/>
            <person name="Wray P.W."/>
            <person name="Young L."/>
            <person name="Ashurst J.L."/>
            <person name="Coulson A."/>
            <person name="Blocker H."/>
            <person name="Durbin R.M."/>
            <person name="Sulston J.E."/>
            <person name="Hubbard T."/>
            <person name="Jackson M.J."/>
            <person name="Bentley D.R."/>
            <person name="Beck S."/>
            <person name="Rogers J."/>
            <person name="Dunham I."/>
        </authorList>
    </citation>
    <scope>NUCLEOTIDE SEQUENCE [LARGE SCALE GENOMIC DNA]</scope>
</reference>
<reference key="11">
    <citation type="submission" date="2005-07" db="EMBL/GenBank/DDBJ databases">
        <authorList>
            <person name="Mural R.J."/>
            <person name="Istrail S."/>
            <person name="Sutton G.G."/>
            <person name="Florea L."/>
            <person name="Halpern A.L."/>
            <person name="Mobarry C.M."/>
            <person name="Lippert R."/>
            <person name="Walenz B."/>
            <person name="Shatkay H."/>
            <person name="Dew I."/>
            <person name="Miller J.R."/>
            <person name="Flanigan M.J."/>
            <person name="Edwards N.J."/>
            <person name="Bolanos R."/>
            <person name="Fasulo D."/>
            <person name="Halldorsson B.V."/>
            <person name="Hannenhalli S."/>
            <person name="Turner R."/>
            <person name="Yooseph S."/>
            <person name="Lu F."/>
            <person name="Nusskern D.R."/>
            <person name="Shue B.C."/>
            <person name="Zheng X.H."/>
            <person name="Zhong F."/>
            <person name="Delcher A.L."/>
            <person name="Huson D.H."/>
            <person name="Kravitz S.A."/>
            <person name="Mouchard L."/>
            <person name="Reinert K."/>
            <person name="Remington K.A."/>
            <person name="Clark A.G."/>
            <person name="Waterman M.S."/>
            <person name="Eichler E.E."/>
            <person name="Adams M.D."/>
            <person name="Hunkapiller M.W."/>
            <person name="Myers E.W."/>
            <person name="Venter J.C."/>
        </authorList>
    </citation>
    <scope>NUCLEOTIDE SEQUENCE [LARGE SCALE GENOMIC DNA]</scope>
</reference>
<reference key="12">
    <citation type="journal article" date="2004" name="Genome Res.">
        <title>The status, quality, and expansion of the NIH full-length cDNA project: the Mammalian Gene Collection (MGC).</title>
        <authorList>
            <consortium name="The MGC Project Team"/>
        </authorList>
    </citation>
    <scope>NUCLEOTIDE SEQUENCE [LARGE SCALE MRNA] (ISOFORM 1)</scope>
    <source>
        <tissue>Cervix</tissue>
    </source>
</reference>
<reference key="13">
    <citation type="journal article" date="1998" name="Chin. Sci. Bull.">
        <title>An alternative splice variant of human thioredoxin.</title>
        <authorList>
            <person name="Wang Y."/>
            <person name="Wang Y.G."/>
            <person name="Zhang Y."/>
            <person name="Yuan Y."/>
            <person name="Ma D."/>
        </authorList>
    </citation>
    <scope>NUCLEOTIDE SEQUENCE [MRNA] OF 2-85 (ISOFORM 2)</scope>
    <scope>ALTERNATIVE SPLICING</scope>
    <source>
        <tissue>Liver</tissue>
    </source>
</reference>
<reference key="14">
    <citation type="journal article" date="1994" name="Biochem. J.">
        <title>Characterization of a thioredoxin-related surface protein.</title>
        <authorList>
            <person name="Dean M.F."/>
            <person name="Martin H."/>
            <person name="Sansom P.A."/>
        </authorList>
    </citation>
    <scope>PROTEIN SEQUENCE OF 2-21 AND 38-57</scope>
    <source>
        <tissue>Monocyte</tissue>
    </source>
</reference>
<reference key="15">
    <citation type="journal article" date="1991" name="Biochem. Biophys. Res. Commun.">
        <title>Identification of a thioredoxin-related protein associated with plasma membranes.</title>
        <authorList>
            <person name="Martin H."/>
            <person name="Dean M."/>
        </authorList>
    </citation>
    <scope>PROTEIN SEQUENCE OF 2-15</scope>
</reference>
<reference key="16">
    <citation type="submission" date="2008-12" db="UniProtKB">
        <authorList>
            <person name="Lubec G."/>
            <person name="Vishwanath V."/>
            <person name="Chen W.-Q."/>
            <person name="Sun Y."/>
        </authorList>
    </citation>
    <scope>PROTEIN SEQUENCE OF 9-48; 73-81 AND 95-105</scope>
    <scope>IDENTIFICATION BY MASS SPECTROMETRY</scope>
    <source>
        <tissue>Brain</tissue>
        <tissue>Cajal-Retzius cell</tissue>
        <tissue>Fetal brain cortex</tissue>
    </source>
</reference>
<reference key="17">
    <citation type="journal article" date="1990" name="Biochem. Biophys. Res. Commun.">
        <title>Human thioredoxin reactivity-structure/function relationship.</title>
        <authorList>
            <person name="Jacquot J.-P."/>
            <person name="de Lamotte F."/>
            <person name="Fontecav M."/>
            <person name="Schuermann P."/>
            <person name="Decottignies P."/>
            <person name="Miginiac-Maslow M."/>
            <person name="Wollman E."/>
        </authorList>
    </citation>
    <scope>FUNCTION</scope>
</reference>
<reference key="18">
    <citation type="journal article" date="1992" name="J. Biol. Chem.">
        <title>Secretion of thioredoxin by normal and neoplastic cells through a leaderless secretory pathway.</title>
        <authorList>
            <person name="Rubartelli A."/>
            <person name="Bajetto A."/>
            <person name="Allavena G."/>
            <person name="Wollman E."/>
            <person name="Sitia R."/>
        </authorList>
    </citation>
    <scope>SUBCELLULAR LOCATION</scope>
</reference>
<reference key="19">
    <citation type="journal article" date="1997" name="Proc. Natl. Acad. Sci. U.S.A.">
        <title>AP-1 transcriptional activity is regulated by a direct association between thioredoxin and Ref-1.</title>
        <authorList>
            <person name="Hirota K."/>
            <person name="Matsui M."/>
            <person name="Iwata S."/>
            <person name="Nishiyama A."/>
            <person name="Mori K."/>
            <person name="Yodoi J."/>
        </authorList>
    </citation>
    <scope>FUNCTION</scope>
    <scope>SUBUNIT</scope>
    <scope>INTERACTION WITH APEX1</scope>
    <scope>SUBCELLULAR LOCATION</scope>
    <scope>ACTIVE SITES</scope>
    <scope>MUTAGENESIS OF CYS-32; CYS-35; CYS-62; CYS-69 AND CYS-73</scope>
</reference>
<reference key="20">
    <citation type="journal article" date="2000" name="Cancer Res.">
        <title>Thioredoxin nuclear translocation and interaction with redox factor-1 activates the activator protein-1 transcription factor in response to ionizing radiation.</title>
        <authorList>
            <person name="Wei S.J."/>
            <person name="Botero A."/>
            <person name="Hirota K."/>
            <person name="Bradbury C.M."/>
            <person name="Markovina S."/>
            <person name="Laszlo A."/>
            <person name="Spitz D.R."/>
            <person name="Goswami P.C."/>
            <person name="Yodoi J."/>
            <person name="Gius D."/>
        </authorList>
    </citation>
    <scope>FUNCTION</scope>
    <scope>INDUCTION</scope>
    <scope>SUBCELLULAR LOCATION</scope>
</reference>
<reference key="21">
    <citation type="journal article" date="2004" name="Arch. Biochem. Biophys.">
        <title>S-nitrosation of thioredoxin in the nitrogen monoxide/superoxide system activates apoptosis signal-regulating kinase 1.</title>
        <authorList>
            <person name="Yasinska I.M."/>
            <person name="Kozhukhar A.V."/>
            <person name="Sumbayev V.V."/>
        </authorList>
    </citation>
    <scope>S-NITROSYLATION</scope>
    <scope>INTERACTION WITH MAP3K5</scope>
</reference>
<reference key="22">
    <citation type="journal article" date="2005" name="Nat. Chem. Biol.">
        <title>Thioredoxin catalyzes the S-nitrosation of the caspase-3 active site cysteine.</title>
        <authorList>
            <person name="Mitchell D.A."/>
            <person name="Marletta M.A."/>
        </authorList>
    </citation>
    <scope>FUNCTION</scope>
    <scope>MUTAGENESIS OF CYS-73</scope>
    <scope>S-NITROSYLATION AT CYS-73</scope>
</reference>
<reference key="23">
    <citation type="journal article" date="2007" name="J. Immunol.">
        <title>Cross-reactivity and 1.4-A crystal structure of Malassezia sympodialis thioredoxin (Mala s 13), a member of a new pan-allergen family.</title>
        <authorList>
            <person name="Limacher A."/>
            <person name="Glaser A.G."/>
            <person name="Meier C."/>
            <person name="Schmid-Grendelmeier P."/>
            <person name="Zeller S."/>
            <person name="Scapozza L."/>
            <person name="Crameri R."/>
        </authorList>
    </citation>
    <scope>FUNCTION</scope>
    <scope>ALLERGEN</scope>
</reference>
<reference key="24">
    <citation type="journal article" date="2007" name="Proc. Natl. Acad. Sci. U.S.A.">
        <title>Thioredoxin is required for S-nitrosation of procaspase-3 and the inhibition of apoptosis in Jurkat cells.</title>
        <authorList>
            <person name="Mitchell D.A."/>
            <person name="Morton S.U."/>
            <person name="Fernhoff N.B."/>
            <person name="Marletta M.A."/>
        </authorList>
    </citation>
    <scope>FUNCTION</scope>
    <scope>MUTAGENESIS OF CYS-69; GLU-70; LYS-72 AND CYS-73</scope>
    <scope>S-NITROSYLATION AT CYS-73 IN RESPONSE TO NITRIC OXIDE</scope>
</reference>
<reference key="25">
    <citation type="journal article" date="2008" name="Allergy">
        <title>Auto- and cross-reactivity to thioredoxin allergens in allergic bronchopulmonary aspergillosis.</title>
        <authorList>
            <person name="Glaser A.G."/>
            <person name="Menz G."/>
            <person name="Kirsch A.I."/>
            <person name="Zeller S."/>
            <person name="Crameri R."/>
            <person name="Rhyner C."/>
        </authorList>
    </citation>
    <scope>FUNCTION</scope>
    <scope>ALLERGEN</scope>
</reference>
<reference key="26">
    <citation type="journal article" date="2008" name="Eur. J. Inflamm.">
        <title>Abnormal proteins in primary breast cancer tissues from 25 Sudanese patients.</title>
        <authorList>
            <person name="Ahamed M.E."/>
            <person name="Ahmed M.E."/>
            <person name="Eltoum A.M."/>
            <person name="Altahir G.O."/>
            <person name="Ahmed K.M."/>
            <person name="Harbi S.O."/>
            <person name="Stansalas J."/>
            <person name="Mohamed A.O."/>
        </authorList>
    </citation>
    <scope>IDENTIFICATION BY MASS SPECTROMETRY</scope>
    <source>
        <tissue>Mammary cancer</tissue>
    </source>
</reference>
<reference key="27">
    <citation type="journal article" date="2009" name="J. Biol. Chem.">
        <title>Salmonella type III secretion effector SlrP is an E3 ubiquitin ligase for mammalian thioredoxin.</title>
        <authorList>
            <person name="Bernal-Bayard J."/>
            <person name="Ramos-Morales F."/>
        </authorList>
    </citation>
    <scope>INTERACTION WITH S.TYPHIMURIUM SLRP</scope>
    <scope>UBIQUITINATION</scope>
</reference>
<reference key="28">
    <citation type="journal article" date="2009" name="Science">
        <title>Lysine acetylation targets protein complexes and co-regulates major cellular functions.</title>
        <authorList>
            <person name="Choudhary C."/>
            <person name="Kumar C."/>
            <person name="Gnad F."/>
            <person name="Nielsen M.L."/>
            <person name="Rehman M."/>
            <person name="Walther T.C."/>
            <person name="Olsen J.V."/>
            <person name="Mann M."/>
        </authorList>
    </citation>
    <scope>ACETYLATION [LARGE SCALE ANALYSIS] AT LYS-3 AND LYS-39</scope>
    <scope>IDENTIFICATION BY MASS SPECTROMETRY [LARGE SCALE ANALYSIS]</scope>
</reference>
<reference key="29">
    <citation type="journal article" date="2011" name="BMC Syst. Biol.">
        <title>Initial characterization of the human central proteome.</title>
        <authorList>
            <person name="Burkard T.R."/>
            <person name="Planyavsky M."/>
            <person name="Kaupe I."/>
            <person name="Breitwieser F.P."/>
            <person name="Buerckstuemmer T."/>
            <person name="Bennett K.L."/>
            <person name="Superti-Furga G."/>
            <person name="Colinge J."/>
        </authorList>
    </citation>
    <scope>IDENTIFICATION BY MASS SPECTROMETRY [LARGE SCALE ANALYSIS]</scope>
</reference>
<reference key="30">
    <citation type="journal article" date="2011" name="J. Allergy Clin. Immunol.">
        <title>Malassezia sympodialis thioredoxin-specific T cells are highly cross-reactive to human thioredoxin in atopic dermatitis.</title>
        <authorList>
            <person name="Balaji H."/>
            <person name="Heratizadeh A."/>
            <person name="Wichmann K."/>
            <person name="Niebuhr M."/>
            <person name="Crameri R."/>
            <person name="Scheynius A."/>
            <person name="Werfel T."/>
        </authorList>
    </citation>
    <scope>ALLERGEN</scope>
</reference>
<reference key="31">
    <citation type="journal article" date="2014" name="J. Proteomics">
        <title>An enzyme assisted RP-RPLC approach for in-depth analysis of human liver phosphoproteome.</title>
        <authorList>
            <person name="Bian Y."/>
            <person name="Song C."/>
            <person name="Cheng K."/>
            <person name="Dong M."/>
            <person name="Wang F."/>
            <person name="Huang J."/>
            <person name="Sun D."/>
            <person name="Wang L."/>
            <person name="Ye M."/>
            <person name="Zou H."/>
        </authorList>
    </citation>
    <scope>IDENTIFICATION BY MASS SPECTROMETRY [LARGE SCALE ANALYSIS]</scope>
    <source>
        <tissue>Liver</tissue>
    </source>
</reference>
<reference key="32">
    <citation type="journal article" date="2015" name="Proteomics">
        <title>N-terminome analysis of the human mitochondrial proteome.</title>
        <authorList>
            <person name="Vaca Jacome A.S."/>
            <person name="Rabilloud T."/>
            <person name="Schaeffer-Reiss C."/>
            <person name="Rompais M."/>
            <person name="Ayoub D."/>
            <person name="Lane L."/>
            <person name="Bairoch A."/>
            <person name="Van Dorsselaer A."/>
            <person name="Carapito C."/>
        </authorList>
    </citation>
    <scope>IDENTIFICATION BY MASS SPECTROMETRY [LARGE SCALE ANALYSIS]</scope>
</reference>
<reference key="33">
    <citation type="journal article" date="1989" name="Biochemistry">
        <title>A proton nuclear magnetic resonance assignment and secondary structure determination of recombinant human thioredoxin.</title>
        <authorList>
            <person name="Forman-Kay J.D."/>
            <person name="Clore G.M."/>
            <person name="Dricoll P.C."/>
            <person name="Wingfield P."/>
            <person name="Richards F.M."/>
            <person name="Gronenborn A.M."/>
        </authorList>
    </citation>
    <scope>STRUCTURE BY NMR</scope>
</reference>
<reference key="34">
    <citation type="journal article" date="1991" name="Biochemistry">
        <title>High-resolution three-dimensional structure of reduced recombinant human thioredoxin in solution.</title>
        <authorList>
            <person name="Forman-Kay J.D."/>
            <person name="Clore G.M."/>
            <person name="Wingfield P."/>
            <person name="Gronenborn A.M."/>
        </authorList>
    </citation>
    <scope>STRUCTURE BY NMR</scope>
</reference>
<reference key="35">
    <citation type="journal article" date="1994" name="Structure">
        <title>The high-resolution three-dimensional solution structures of the oxidized and reduced states of human thioredoxin.</title>
        <authorList>
            <person name="Qin J."/>
            <person name="Clore G.M."/>
            <person name="Gronenborn A.M."/>
        </authorList>
    </citation>
    <scope>STRUCTURE BY NMR</scope>
</reference>
<reference key="36">
    <citation type="journal article" date="1995" name="Structure">
        <title>Solution structure of human thioredoxin in a mixed disulfide intermediate complex with its target peptide from the transcription factor NF kappa B.</title>
        <authorList>
            <person name="Qin J."/>
            <person name="Clore G.M."/>
            <person name="Kennedy W.M."/>
            <person name="Huth J.R."/>
            <person name="Gronenborn A.M."/>
        </authorList>
    </citation>
    <scope>STRUCTURE BY NMR</scope>
</reference>
<reference key="37">
    <citation type="journal article" date="1996" name="Structure">
        <title>The solution structure of human thioredoxin complexed with its target from Ref-1 reveals peptide chain reversal.</title>
        <authorList>
            <person name="Qin J."/>
            <person name="Clore G.M."/>
            <person name="Kennedy W.P."/>
            <person name="Kuszewski J."/>
            <person name="Gronenborn A.M."/>
        </authorList>
    </citation>
    <scope>STRUCTURE BY NMR</scope>
</reference>
<reference key="38">
    <citation type="journal article" date="1996" name="Structure">
        <title>Crystal structures of reduced, oxidized, and mutated human thioredoxins: evidence for a regulatory homodimer.</title>
        <authorList>
            <person name="Weichsel A."/>
            <person name="Gasdaska J.R."/>
            <person name="Powis G."/>
            <person name="Montfort W.R."/>
        </authorList>
    </citation>
    <scope>X-RAY CRYSTALLOGRAPHY (1.65 ANGSTROMS)</scope>
</reference>
<reference key="39">
    <citation type="journal article" date="1997" name="Biochemistry">
        <title>Human thioredoxin homodimers: regulation by pH, role of aspartate 60, and crystal structure of the aspartate 60 --&gt; asparagine mutant.</title>
        <authorList>
            <person name="Andersen J.F."/>
            <person name="Sanders D.A."/>
            <person name="Gasdaska J.R."/>
            <person name="Weichsel A."/>
            <person name="Powis G."/>
            <person name="Montfort W.R."/>
        </authorList>
    </citation>
    <scope>X-RAY CRYSTALLOGRAPHY (2.1 ANGSTROMS) OF MUTANT ASN-60</scope>
    <scope>SUBUNIT</scope>
</reference>
<reference key="40">
    <citation type="journal article" date="2007" name="Biochemistry">
        <title>Buried S-nitrosocysteine revealed in crystal structures of human thioredoxin.</title>
        <authorList>
            <person name="Weichsel A."/>
            <person name="Brailey J.L."/>
            <person name="Montfort W.R."/>
        </authorList>
    </citation>
    <scope>X-RAY CRYSTALLOGRAPHY (1.2 ANGSTROMS)</scope>
    <scope>SUBUNIT</scope>
    <scope>DISULFIDE BONDS</scope>
    <scope>S-NITROSYLATION AT CYS-62 AND CYS-69</scope>
</reference>
<organism>
    <name type="scientific">Homo sapiens</name>
    <name type="common">Human</name>
    <dbReference type="NCBI Taxonomy" id="9606"/>
    <lineage>
        <taxon>Eukaryota</taxon>
        <taxon>Metazoa</taxon>
        <taxon>Chordata</taxon>
        <taxon>Craniata</taxon>
        <taxon>Vertebrata</taxon>
        <taxon>Euteleostomi</taxon>
        <taxon>Mammalia</taxon>
        <taxon>Eutheria</taxon>
        <taxon>Euarchontoglires</taxon>
        <taxon>Primates</taxon>
        <taxon>Haplorrhini</taxon>
        <taxon>Catarrhini</taxon>
        <taxon>Hominidae</taxon>
        <taxon>Homo</taxon>
    </lineage>
</organism>
<keyword id="KW-0002">3D-structure</keyword>
<keyword id="KW-0007">Acetylation</keyword>
<keyword id="KW-0010">Activator</keyword>
<keyword id="KW-0020">Allergen</keyword>
<keyword id="KW-0025">Alternative splicing</keyword>
<keyword id="KW-0963">Cytoplasm</keyword>
<keyword id="KW-0903">Direct protein sequencing</keyword>
<keyword id="KW-1015">Disulfide bond</keyword>
<keyword id="KW-0249">Electron transport</keyword>
<keyword id="KW-0539">Nucleus</keyword>
<keyword id="KW-1267">Proteomics identification</keyword>
<keyword id="KW-0676">Redox-active center</keyword>
<keyword id="KW-1185">Reference proteome</keyword>
<keyword id="KW-0702">S-nitrosylation</keyword>
<keyword id="KW-0964">Secreted</keyword>
<keyword id="KW-0804">Transcription</keyword>
<keyword id="KW-0805">Transcription regulation</keyword>
<keyword id="KW-0813">Transport</keyword>
<keyword id="KW-0832">Ubl conjugation</keyword>
<name>THIO_HUMAN</name>
<protein>
    <recommendedName>
        <fullName>Thioredoxin</fullName>
        <shortName>Trx</shortName>
    </recommendedName>
    <alternativeName>
        <fullName>ATL-derived factor</fullName>
        <shortName>ADF</shortName>
    </alternativeName>
    <alternativeName>
        <fullName>Surface-associated sulphydryl protein</fullName>
        <shortName>SASP</shortName>
    </alternativeName>
    <allergenName evidence="20">Hom s Trx</allergenName>
</protein>
<dbReference type="EMBL" id="J04026">
    <property type="protein sequence ID" value="AAA74596.1"/>
    <property type="molecule type" value="mRNA"/>
</dbReference>
<dbReference type="EMBL" id="X77584">
    <property type="protein sequence ID" value="CAA54687.1"/>
    <property type="molecule type" value="mRNA"/>
</dbReference>
<dbReference type="EMBL" id="X54539">
    <property type="protein sequence ID" value="CAA38410.1"/>
    <property type="molecule type" value="Genomic_DNA"/>
</dbReference>
<dbReference type="EMBL" id="X54540">
    <property type="protein sequence ID" value="CAA38410.1"/>
    <property type="status" value="JOINED"/>
    <property type="molecule type" value="Genomic_DNA"/>
</dbReference>
<dbReference type="EMBL" id="X54541">
    <property type="protein sequence ID" value="CAA38410.1"/>
    <property type="status" value="JOINED"/>
    <property type="molecule type" value="Genomic_DNA"/>
</dbReference>
<dbReference type="EMBL" id="AF276919">
    <property type="protein sequence ID" value="AAF86466.1"/>
    <property type="molecule type" value="mRNA"/>
</dbReference>
<dbReference type="EMBL" id="AY004872">
    <property type="protein sequence ID" value="AAF87085.1"/>
    <property type="molecule type" value="mRNA"/>
</dbReference>
<dbReference type="EMBL" id="AF313911">
    <property type="protein sequence ID" value="AAG34699.1"/>
    <property type="molecule type" value="mRNA"/>
</dbReference>
<dbReference type="EMBL" id="AK289508">
    <property type="protein sequence ID" value="BAF82197.1"/>
    <property type="molecule type" value="mRNA"/>
</dbReference>
<dbReference type="EMBL" id="CR407665">
    <property type="protein sequence ID" value="CAG28593.1"/>
    <property type="molecule type" value="mRNA"/>
</dbReference>
<dbReference type="EMBL" id="AF548001">
    <property type="protein sequence ID" value="AAN33187.1"/>
    <property type="molecule type" value="Genomic_DNA"/>
</dbReference>
<dbReference type="EMBL" id="AL158158">
    <property type="status" value="NOT_ANNOTATED_CDS"/>
    <property type="molecule type" value="Genomic_DNA"/>
</dbReference>
<dbReference type="EMBL" id="CH471105">
    <property type="protein sequence ID" value="EAW59059.1"/>
    <property type="molecule type" value="Genomic_DNA"/>
</dbReference>
<dbReference type="EMBL" id="CH471105">
    <property type="protein sequence ID" value="EAW59060.1"/>
    <property type="molecule type" value="Genomic_DNA"/>
</dbReference>
<dbReference type="EMBL" id="BC003377">
    <property type="protein sequence ID" value="AAH03377.1"/>
    <property type="molecule type" value="mRNA"/>
</dbReference>
<dbReference type="EMBL" id="BC054866">
    <property type="protein sequence ID" value="AAH54866.1"/>
    <property type="molecule type" value="mRNA"/>
</dbReference>
<dbReference type="EMBL" id="AF065241">
    <property type="protein sequence ID" value="AAC17430.1"/>
    <property type="molecule type" value="mRNA"/>
</dbReference>
<dbReference type="CCDS" id="CCDS35103.1">
    <molecule id="P10599-1"/>
</dbReference>
<dbReference type="CCDS" id="CCDS59139.1">
    <molecule id="P10599-2"/>
</dbReference>
<dbReference type="PIR" id="JH0568">
    <property type="entry name" value="JH0568"/>
</dbReference>
<dbReference type="RefSeq" id="NP_001231867.1">
    <molecule id="P10599-2"/>
    <property type="nucleotide sequence ID" value="NM_001244938.2"/>
</dbReference>
<dbReference type="RefSeq" id="NP_003320.2">
    <molecule id="P10599-1"/>
    <property type="nucleotide sequence ID" value="NM_003329.4"/>
</dbReference>
<dbReference type="PDB" id="1AIU">
    <property type="method" value="X-ray"/>
    <property type="resolution" value="2.00 A"/>
    <property type="chains" value="A=1-105"/>
</dbReference>
<dbReference type="PDB" id="1AUC">
    <property type="method" value="X-ray"/>
    <property type="resolution" value="2.10 A"/>
    <property type="chains" value="A=1-105"/>
</dbReference>
<dbReference type="PDB" id="1CQG">
    <property type="method" value="NMR"/>
    <property type="chains" value="A=1-105"/>
</dbReference>
<dbReference type="PDB" id="1CQH">
    <property type="method" value="NMR"/>
    <property type="chains" value="A=1-105"/>
</dbReference>
<dbReference type="PDB" id="1ERT">
    <property type="method" value="X-ray"/>
    <property type="resolution" value="1.70 A"/>
    <property type="chains" value="A=1-105"/>
</dbReference>
<dbReference type="PDB" id="1ERU">
    <property type="method" value="X-ray"/>
    <property type="resolution" value="2.10 A"/>
    <property type="chains" value="A=1-105"/>
</dbReference>
<dbReference type="PDB" id="1ERV">
    <property type="method" value="X-ray"/>
    <property type="resolution" value="1.65 A"/>
    <property type="chains" value="A=1-105"/>
</dbReference>
<dbReference type="PDB" id="1ERW">
    <property type="method" value="X-ray"/>
    <property type="resolution" value="1.80 A"/>
    <property type="chains" value="A=1-105"/>
</dbReference>
<dbReference type="PDB" id="1M7T">
    <property type="method" value="NMR"/>
    <property type="chains" value="A=1-66"/>
</dbReference>
<dbReference type="PDB" id="1MDI">
    <property type="method" value="NMR"/>
    <property type="chains" value="A=1-105"/>
</dbReference>
<dbReference type="PDB" id="1MDJ">
    <property type="method" value="NMR"/>
    <property type="chains" value="A=1-105"/>
</dbReference>
<dbReference type="PDB" id="1MDK">
    <property type="method" value="NMR"/>
    <property type="chains" value="A=1-105"/>
</dbReference>
<dbReference type="PDB" id="1TRS">
    <property type="method" value="NMR"/>
    <property type="chains" value="A=1-105"/>
</dbReference>
<dbReference type="PDB" id="1TRU">
    <property type="method" value="NMR"/>
    <property type="chains" value="A=1-105"/>
</dbReference>
<dbReference type="PDB" id="1TRV">
    <property type="method" value="NMR"/>
    <property type="chains" value="A=1-105"/>
</dbReference>
<dbReference type="PDB" id="1TRW">
    <property type="method" value="NMR"/>
    <property type="chains" value="A=1-105"/>
</dbReference>
<dbReference type="PDB" id="2HSH">
    <property type="method" value="X-ray"/>
    <property type="resolution" value="1.35 A"/>
    <property type="chains" value="A=1-105"/>
</dbReference>
<dbReference type="PDB" id="2HXK">
    <property type="method" value="X-ray"/>
    <property type="resolution" value="1.65 A"/>
    <property type="chains" value="A/B/C=1-105"/>
</dbReference>
<dbReference type="PDB" id="2IFQ">
    <property type="method" value="X-ray"/>
    <property type="resolution" value="1.20 A"/>
    <property type="chains" value="A/B/C=1-105"/>
</dbReference>
<dbReference type="PDB" id="2IIY">
    <property type="method" value="X-ray"/>
    <property type="resolution" value="1.70 A"/>
    <property type="chains" value="A=1-105"/>
</dbReference>
<dbReference type="PDB" id="3E3E">
    <property type="method" value="X-ray"/>
    <property type="resolution" value="2.01 A"/>
    <property type="chains" value="A/B=1-105"/>
</dbReference>
<dbReference type="PDB" id="3KD0">
    <property type="method" value="X-ray"/>
    <property type="resolution" value="1.70 A"/>
    <property type="chains" value="A=1-105"/>
</dbReference>
<dbReference type="PDB" id="3M9J">
    <property type="method" value="X-ray"/>
    <property type="resolution" value="1.10 A"/>
    <property type="chains" value="A/B=1-105"/>
</dbReference>
<dbReference type="PDB" id="3M9K">
    <property type="method" value="X-ray"/>
    <property type="resolution" value="1.50 A"/>
    <property type="chains" value="A/B=1-105"/>
</dbReference>
<dbReference type="PDB" id="3QFA">
    <property type="method" value="X-ray"/>
    <property type="resolution" value="2.20 A"/>
    <property type="chains" value="C/D=2-105"/>
</dbReference>
<dbReference type="PDB" id="3QFB">
    <property type="method" value="X-ray"/>
    <property type="resolution" value="2.60 A"/>
    <property type="chains" value="C/D=2-105"/>
</dbReference>
<dbReference type="PDB" id="3TRX">
    <property type="method" value="NMR"/>
    <property type="chains" value="A=1-105"/>
</dbReference>
<dbReference type="PDB" id="4LL1">
    <property type="method" value="X-ray"/>
    <property type="resolution" value="2.00 A"/>
    <property type="chains" value="B/D=1-105"/>
</dbReference>
<dbReference type="PDB" id="4LL4">
    <property type="method" value="X-ray"/>
    <property type="resolution" value="2.70 A"/>
    <property type="chains" value="B/D=1-105"/>
</dbReference>
<dbReference type="PDB" id="4OO4">
    <property type="method" value="X-ray"/>
    <property type="resolution" value="0.97 A"/>
    <property type="chains" value="A/B=1-105"/>
</dbReference>
<dbReference type="PDB" id="4OO5">
    <property type="method" value="X-ray"/>
    <property type="resolution" value="1.54 A"/>
    <property type="chains" value="A=1-105"/>
</dbReference>
<dbReference type="PDB" id="4POK">
    <property type="method" value="X-ray"/>
    <property type="resolution" value="2.52 A"/>
    <property type="chains" value="A/B/C/D=1-105"/>
</dbReference>
<dbReference type="PDB" id="4POL">
    <property type="method" value="X-ray"/>
    <property type="resolution" value="2.80 A"/>
    <property type="chains" value="A/B/C/D=1-105"/>
</dbReference>
<dbReference type="PDB" id="4POM">
    <property type="method" value="X-ray"/>
    <property type="resolution" value="1.85 A"/>
    <property type="chains" value="A/B/C/D=1-105"/>
</dbReference>
<dbReference type="PDB" id="4PUF">
    <property type="method" value="X-ray"/>
    <property type="resolution" value="3.30 A"/>
    <property type="chains" value="C/D=1-105"/>
</dbReference>
<dbReference type="PDB" id="4TRX">
    <property type="method" value="NMR"/>
    <property type="chains" value="A=1-105"/>
</dbReference>
<dbReference type="PDB" id="5DQY">
    <property type="method" value="X-ray"/>
    <property type="resolution" value="1.40 A"/>
    <property type="chains" value="A=1-105"/>
</dbReference>
<dbReference type="PDBsum" id="1AIU"/>
<dbReference type="PDBsum" id="1AUC"/>
<dbReference type="PDBsum" id="1CQG"/>
<dbReference type="PDBsum" id="1CQH"/>
<dbReference type="PDBsum" id="1ERT"/>
<dbReference type="PDBsum" id="1ERU"/>
<dbReference type="PDBsum" id="1ERV"/>
<dbReference type="PDBsum" id="1ERW"/>
<dbReference type="PDBsum" id="1M7T"/>
<dbReference type="PDBsum" id="1MDI"/>
<dbReference type="PDBsum" id="1MDJ"/>
<dbReference type="PDBsum" id="1MDK"/>
<dbReference type="PDBsum" id="1TRS"/>
<dbReference type="PDBsum" id="1TRU"/>
<dbReference type="PDBsum" id="1TRV"/>
<dbReference type="PDBsum" id="1TRW"/>
<dbReference type="PDBsum" id="2HSH"/>
<dbReference type="PDBsum" id="2HXK"/>
<dbReference type="PDBsum" id="2IFQ"/>
<dbReference type="PDBsum" id="2IIY"/>
<dbReference type="PDBsum" id="3E3E"/>
<dbReference type="PDBsum" id="3KD0"/>
<dbReference type="PDBsum" id="3M9J"/>
<dbReference type="PDBsum" id="3M9K"/>
<dbReference type="PDBsum" id="3QFA"/>
<dbReference type="PDBsum" id="3QFB"/>
<dbReference type="PDBsum" id="3TRX"/>
<dbReference type="PDBsum" id="4LL1"/>
<dbReference type="PDBsum" id="4LL4"/>
<dbReference type="PDBsum" id="4OO4"/>
<dbReference type="PDBsum" id="4OO5"/>
<dbReference type="PDBsum" id="4POK"/>
<dbReference type="PDBsum" id="4POL"/>
<dbReference type="PDBsum" id="4POM"/>
<dbReference type="PDBsum" id="4PUF"/>
<dbReference type="PDBsum" id="4TRX"/>
<dbReference type="PDBsum" id="5DQY"/>
<dbReference type="BMRB" id="P10599"/>
<dbReference type="SMR" id="P10599"/>
<dbReference type="BioGRID" id="113146">
    <property type="interactions" value="360"/>
</dbReference>
<dbReference type="CORUM" id="P10599"/>
<dbReference type="DIP" id="DIP-6129N"/>
<dbReference type="FunCoup" id="P10599">
    <property type="interactions" value="2207"/>
</dbReference>
<dbReference type="IntAct" id="P10599">
    <property type="interactions" value="124"/>
</dbReference>
<dbReference type="MINT" id="P10599"/>
<dbReference type="STRING" id="9606.ENSP00000363641"/>
<dbReference type="BindingDB" id="P10599"/>
<dbReference type="ChEMBL" id="CHEMBL2010624"/>
<dbReference type="DrugBank" id="DB14511">
    <property type="generic name" value="Acetate"/>
</dbReference>
<dbReference type="DrugBank" id="DB12695">
    <property type="generic name" value="Phenethyl Isothiocyanate"/>
</dbReference>
<dbReference type="DrugBank" id="DB05448">
    <property type="generic name" value="PX-12"/>
</dbReference>
<dbReference type="Allergome" id="3543">
    <property type="allergen name" value="Hom s Trx"/>
</dbReference>
<dbReference type="CarbonylDB" id="P10599"/>
<dbReference type="GlyGen" id="P10599">
    <property type="glycosylation" value="2 sites, 1 O-linked glycan (1 site)"/>
</dbReference>
<dbReference type="iPTMnet" id="P10599"/>
<dbReference type="MetOSite" id="P10599"/>
<dbReference type="PhosphoSitePlus" id="P10599"/>
<dbReference type="SwissPalm" id="P10599"/>
<dbReference type="BioMuta" id="TXN"/>
<dbReference type="DMDM" id="135773"/>
<dbReference type="REPRODUCTION-2DPAGE" id="IPI00216298"/>
<dbReference type="jPOST" id="P10599"/>
<dbReference type="MassIVE" id="P10599"/>
<dbReference type="PaxDb" id="9606-ENSP00000363641"/>
<dbReference type="PeptideAtlas" id="P10599"/>
<dbReference type="PRIDE" id="P10599"/>
<dbReference type="ProteomicsDB" id="3175"/>
<dbReference type="ProteomicsDB" id="52616">
    <molecule id="P10599-1"/>
</dbReference>
<dbReference type="TopDownProteomics" id="P10599-1">
    <molecule id="P10599-1"/>
</dbReference>
<dbReference type="TopDownProteomics" id="P10599-2">
    <molecule id="P10599-2"/>
</dbReference>
<dbReference type="Antibodypedia" id="3281">
    <property type="antibodies" value="842 antibodies from 40 providers"/>
</dbReference>
<dbReference type="DNASU" id="7295"/>
<dbReference type="Ensembl" id="ENST00000374515.9">
    <molecule id="P10599-2"/>
    <property type="protein sequence ID" value="ENSP00000363639.5"/>
    <property type="gene ID" value="ENSG00000136810.13"/>
</dbReference>
<dbReference type="Ensembl" id="ENST00000374517.6">
    <molecule id="P10599-1"/>
    <property type="protein sequence ID" value="ENSP00000363641.5"/>
    <property type="gene ID" value="ENSG00000136810.13"/>
</dbReference>
<dbReference type="GeneID" id="7295"/>
<dbReference type="KEGG" id="hsa:7295"/>
<dbReference type="MANE-Select" id="ENST00000374517.6">
    <property type="protein sequence ID" value="ENSP00000363641.5"/>
    <property type="RefSeq nucleotide sequence ID" value="NM_003329.4"/>
    <property type="RefSeq protein sequence ID" value="NP_003320.2"/>
</dbReference>
<dbReference type="UCSC" id="uc004bep.3">
    <molecule id="P10599-1"/>
    <property type="organism name" value="human"/>
</dbReference>
<dbReference type="AGR" id="HGNC:12435"/>
<dbReference type="CTD" id="7295"/>
<dbReference type="DisGeNET" id="7295"/>
<dbReference type="GeneCards" id="TXN"/>
<dbReference type="HGNC" id="HGNC:12435">
    <property type="gene designation" value="TXN"/>
</dbReference>
<dbReference type="HPA" id="ENSG00000136810">
    <property type="expression patterns" value="Tissue enhanced (esophagus)"/>
</dbReference>
<dbReference type="MIM" id="187700">
    <property type="type" value="gene"/>
</dbReference>
<dbReference type="neXtProt" id="NX_P10599"/>
<dbReference type="OpenTargets" id="ENSG00000136810"/>
<dbReference type="PharmGKB" id="PA37091"/>
<dbReference type="VEuPathDB" id="HostDB:ENSG00000136810"/>
<dbReference type="eggNOG" id="KOG0907">
    <property type="taxonomic scope" value="Eukaryota"/>
</dbReference>
<dbReference type="GeneTree" id="ENSGT00940000154259"/>
<dbReference type="HOGENOM" id="CLU_090389_14_6_1"/>
<dbReference type="InParanoid" id="P10599"/>
<dbReference type="OMA" id="WCIPSVF"/>
<dbReference type="OrthoDB" id="2121326at2759"/>
<dbReference type="PAN-GO" id="P10599">
    <property type="GO annotations" value="0 GO annotations based on evolutionary models"/>
</dbReference>
<dbReference type="PhylomeDB" id="P10599"/>
<dbReference type="TreeFam" id="TF318932"/>
<dbReference type="PathwayCommons" id="P10599"/>
<dbReference type="Reactome" id="R-HSA-2559580">
    <property type="pathway name" value="Oxidative Stress Induced Senescence"/>
</dbReference>
<dbReference type="Reactome" id="R-HSA-3299685">
    <property type="pathway name" value="Detoxification of Reactive Oxygen Species"/>
</dbReference>
<dbReference type="Reactome" id="R-HSA-499943">
    <property type="pathway name" value="Interconversion of nucleotide di- and triphosphates"/>
</dbReference>
<dbReference type="Reactome" id="R-HSA-5628897">
    <property type="pathway name" value="TP53 Regulates Metabolic Genes"/>
</dbReference>
<dbReference type="Reactome" id="R-HSA-5676934">
    <property type="pathway name" value="Protein repair"/>
</dbReference>
<dbReference type="Reactome" id="R-HSA-844456">
    <property type="pathway name" value="The NLRP3 inflammasome"/>
</dbReference>
<dbReference type="Reactome" id="R-HSA-9617629">
    <property type="pathway name" value="Regulation of FOXO transcriptional activity by acetylation"/>
</dbReference>
<dbReference type="Reactome" id="R-HSA-9660826">
    <property type="pathway name" value="Purinergic signaling in leishmaniasis infection"/>
</dbReference>
<dbReference type="Reactome" id="R-HSA-9818027">
    <property type="pathway name" value="NFE2L2 regulating anti-oxidant/detoxification enzymes"/>
</dbReference>
<dbReference type="SignaLink" id="P10599"/>
<dbReference type="SIGNOR" id="P10599"/>
<dbReference type="BioGRID-ORCS" id="7295">
    <property type="hits" value="718 hits in 1106 CRISPR screens"/>
</dbReference>
<dbReference type="CD-CODE" id="DEE660B4">
    <property type="entry name" value="Stress granule"/>
</dbReference>
<dbReference type="ChiTaRS" id="TXN">
    <property type="organism name" value="human"/>
</dbReference>
<dbReference type="EvolutionaryTrace" id="P10599"/>
<dbReference type="GeneWiki" id="Thioredoxin"/>
<dbReference type="GenomeRNAi" id="7295"/>
<dbReference type="Pharos" id="P10599">
    <property type="development level" value="Tchem"/>
</dbReference>
<dbReference type="PRO" id="PR:P10599"/>
<dbReference type="Proteomes" id="UP000005640">
    <property type="component" value="Chromosome 9"/>
</dbReference>
<dbReference type="RNAct" id="P10599">
    <property type="molecule type" value="protein"/>
</dbReference>
<dbReference type="Bgee" id="ENSG00000136810">
    <property type="expression patterns" value="Expressed in gingival epithelium and 208 other cell types or tissues"/>
</dbReference>
<dbReference type="ExpressionAtlas" id="P10599">
    <property type="expression patterns" value="baseline and differential"/>
</dbReference>
<dbReference type="GO" id="GO:0005737">
    <property type="term" value="C:cytoplasm"/>
    <property type="evidence" value="ECO:0000314"/>
    <property type="project" value="UniProtKB"/>
</dbReference>
<dbReference type="GO" id="GO:0005829">
    <property type="term" value="C:cytosol"/>
    <property type="evidence" value="ECO:0000314"/>
    <property type="project" value="HPA"/>
</dbReference>
<dbReference type="GO" id="GO:0070062">
    <property type="term" value="C:extracellular exosome"/>
    <property type="evidence" value="ECO:0007005"/>
    <property type="project" value="UniProtKB"/>
</dbReference>
<dbReference type="GO" id="GO:0005576">
    <property type="term" value="C:extracellular region"/>
    <property type="evidence" value="ECO:0000314"/>
    <property type="project" value="UniProtKB"/>
</dbReference>
<dbReference type="GO" id="GO:0005654">
    <property type="term" value="C:nucleoplasm"/>
    <property type="evidence" value="ECO:0000314"/>
    <property type="project" value="HPA"/>
</dbReference>
<dbReference type="GO" id="GO:0005634">
    <property type="term" value="C:nucleus"/>
    <property type="evidence" value="ECO:0000314"/>
    <property type="project" value="UniProtKB"/>
</dbReference>
<dbReference type="GO" id="GO:0042803">
    <property type="term" value="F:protein homodimerization activity"/>
    <property type="evidence" value="ECO:0000314"/>
    <property type="project" value="UniProtKB"/>
</dbReference>
<dbReference type="GO" id="GO:0047134">
    <property type="term" value="F:protein-disulfide reductase [NAD(P)H] activity"/>
    <property type="evidence" value="ECO:0000314"/>
    <property type="project" value="UniProtKB"/>
</dbReference>
<dbReference type="GO" id="GO:0015035">
    <property type="term" value="F:protein-disulfide reductase activity"/>
    <property type="evidence" value="ECO:0000314"/>
    <property type="project" value="UniProtKB"/>
</dbReference>
<dbReference type="GO" id="GO:0003723">
    <property type="term" value="F:RNA binding"/>
    <property type="evidence" value="ECO:0007005"/>
    <property type="project" value="UniProtKB"/>
</dbReference>
<dbReference type="GO" id="GO:0004791">
    <property type="term" value="F:thioredoxin-disulfide reductase (NADPH) activity"/>
    <property type="evidence" value="ECO:0000304"/>
    <property type="project" value="Reactome"/>
</dbReference>
<dbReference type="GO" id="GO:0045454">
    <property type="term" value="P:cell redox homeostasis"/>
    <property type="evidence" value="ECO:0000314"/>
    <property type="project" value="UniProtKB"/>
</dbReference>
<dbReference type="GO" id="GO:0061692">
    <property type="term" value="P:cellular detoxification of hydrogen peroxide"/>
    <property type="evidence" value="ECO:0000316"/>
    <property type="project" value="ParkinsonsUK-UCL"/>
</dbReference>
<dbReference type="GO" id="GO:0046826">
    <property type="term" value="P:negative regulation of protein export from nucleus"/>
    <property type="evidence" value="ECO:0007669"/>
    <property type="project" value="Ensembl"/>
</dbReference>
<dbReference type="GO" id="GO:0000122">
    <property type="term" value="P:negative regulation of transcription by RNA polymerase II"/>
    <property type="evidence" value="ECO:0007669"/>
    <property type="project" value="Ensembl"/>
</dbReference>
<dbReference type="GO" id="GO:0043388">
    <property type="term" value="P:positive regulation of DNA binding"/>
    <property type="evidence" value="ECO:0000314"/>
    <property type="project" value="UniProtKB"/>
</dbReference>
<dbReference type="GO" id="GO:2000170">
    <property type="term" value="P:positive regulation of peptidyl-cysteine S-nitrosylation"/>
    <property type="evidence" value="ECO:0000315"/>
    <property type="project" value="UniProtKB"/>
</dbReference>
<dbReference type="GO" id="GO:0051897">
    <property type="term" value="P:positive regulation of phosphatidylinositol 3-kinase/protein kinase B signal transduction"/>
    <property type="evidence" value="ECO:0000315"/>
    <property type="project" value="ParkinsonsUK-UCL"/>
</dbReference>
<dbReference type="GO" id="GO:0071731">
    <property type="term" value="P:response to nitric oxide"/>
    <property type="evidence" value="ECO:0000315"/>
    <property type="project" value="UniProtKB"/>
</dbReference>
<dbReference type="GO" id="GO:0009314">
    <property type="term" value="P:response to radiation"/>
    <property type="evidence" value="ECO:0000314"/>
    <property type="project" value="UniProtKB"/>
</dbReference>
<dbReference type="CDD" id="cd02947">
    <property type="entry name" value="TRX_family"/>
    <property type="match status" value="1"/>
</dbReference>
<dbReference type="FunFam" id="3.40.30.10:FF:000130">
    <property type="entry name" value="Thioredoxin"/>
    <property type="match status" value="1"/>
</dbReference>
<dbReference type="Gene3D" id="3.40.30.10">
    <property type="entry name" value="Glutaredoxin"/>
    <property type="match status" value="1"/>
</dbReference>
<dbReference type="InterPro" id="IPR005746">
    <property type="entry name" value="Thioredoxin"/>
</dbReference>
<dbReference type="InterPro" id="IPR036249">
    <property type="entry name" value="Thioredoxin-like_sf"/>
</dbReference>
<dbReference type="InterPro" id="IPR017937">
    <property type="entry name" value="Thioredoxin_CS"/>
</dbReference>
<dbReference type="InterPro" id="IPR013766">
    <property type="entry name" value="Thioredoxin_domain"/>
</dbReference>
<dbReference type="PANTHER" id="PTHR46115">
    <property type="entry name" value="THIOREDOXIN-LIKE PROTEIN 1"/>
    <property type="match status" value="1"/>
</dbReference>
<dbReference type="Pfam" id="PF00085">
    <property type="entry name" value="Thioredoxin"/>
    <property type="match status" value="1"/>
</dbReference>
<dbReference type="PIRSF" id="PIRSF000077">
    <property type="entry name" value="Thioredoxin"/>
    <property type="match status" value="1"/>
</dbReference>
<dbReference type="PRINTS" id="PR00421">
    <property type="entry name" value="THIOREDOXIN"/>
</dbReference>
<dbReference type="SUPFAM" id="SSF52833">
    <property type="entry name" value="Thioredoxin-like"/>
    <property type="match status" value="1"/>
</dbReference>
<dbReference type="PROSITE" id="PS00194">
    <property type="entry name" value="THIOREDOXIN_1"/>
    <property type="match status" value="1"/>
</dbReference>
<dbReference type="PROSITE" id="PS51352">
    <property type="entry name" value="THIOREDOXIN_2"/>
    <property type="match status" value="1"/>
</dbReference>
<accession>P10599</accession>
<accession>B1ALW1</accession>
<accession>O60744</accession>
<accession>Q53X69</accession>
<accession>Q96KI3</accession>
<accession>Q9UDG5</accession>
<proteinExistence type="evidence at protein level"/>
<evidence type="ECO:0000250" key="1">
    <source>
        <dbReference type="UniProtKB" id="P10639"/>
    </source>
</evidence>
<evidence type="ECO:0000255" key="2">
    <source>
        <dbReference type="PROSITE-ProRule" id="PRU00691"/>
    </source>
</evidence>
<evidence type="ECO:0000269" key="3">
    <source>
    </source>
</evidence>
<evidence type="ECO:0000269" key="4">
    <source>
    </source>
</evidence>
<evidence type="ECO:0000269" key="5">
    <source>
    </source>
</evidence>
<evidence type="ECO:0000269" key="6">
    <source>
    </source>
</evidence>
<evidence type="ECO:0000269" key="7">
    <source>
    </source>
</evidence>
<evidence type="ECO:0000269" key="8">
    <source>
    </source>
</evidence>
<evidence type="ECO:0000269" key="9">
    <source>
    </source>
</evidence>
<evidence type="ECO:0000269" key="10">
    <source>
    </source>
</evidence>
<evidence type="ECO:0000269" key="11">
    <source>
    </source>
</evidence>
<evidence type="ECO:0000269" key="12">
    <source>
    </source>
</evidence>
<evidence type="ECO:0000269" key="13">
    <source>
    </source>
</evidence>
<evidence type="ECO:0000269" key="14">
    <source>
    </source>
</evidence>
<evidence type="ECO:0000269" key="15">
    <source>
    </source>
</evidence>
<evidence type="ECO:0000269" key="16">
    <source>
    </source>
</evidence>
<evidence type="ECO:0000269" key="17">
    <source>
    </source>
</evidence>
<evidence type="ECO:0000269" key="18">
    <source>
    </source>
</evidence>
<evidence type="ECO:0000303" key="19">
    <source ref="13"/>
</evidence>
<evidence type="ECO:0000305" key="20"/>
<evidence type="ECO:0007744" key="21">
    <source>
    </source>
</evidence>
<evidence type="ECO:0007829" key="22">
    <source>
        <dbReference type="PDB" id="2IFQ"/>
    </source>
</evidence>
<evidence type="ECO:0007829" key="23">
    <source>
        <dbReference type="PDB" id="3QFB"/>
    </source>
</evidence>
<evidence type="ECO:0007829" key="24">
    <source>
        <dbReference type="PDB" id="4OO4"/>
    </source>
</evidence>
<evidence type="ECO:0007829" key="25">
    <source>
        <dbReference type="PDB" id="4TRX"/>
    </source>
</evidence>
<sequence length="105" mass="11737">MVKQIESKTAFQEALDAAGDKLVVVDFSATWCGPCKMIKPFFHSLSEKYSNVIFLEVDVDDCQDVASECEVKCMPTFQFFKKGQKVGEFSGANKEKLEATINELV</sequence>
<feature type="initiator methionine" description="Removed" evidence="12 16">
    <location>
        <position position="1"/>
    </location>
</feature>
<feature type="chain" id="PRO_0000120005" description="Thioredoxin">
    <location>
        <begin position="2"/>
        <end position="105"/>
    </location>
</feature>
<feature type="domain" description="Thioredoxin" evidence="2">
    <location>
        <begin position="2"/>
        <end position="105"/>
    </location>
</feature>
<feature type="active site" description="Nucleophile" evidence="17">
    <location>
        <position position="32"/>
    </location>
</feature>
<feature type="active site" description="Nucleophile" evidence="17">
    <location>
        <position position="35"/>
    </location>
</feature>
<feature type="site" description="Deprotonates C-terminal active site Cys" evidence="20">
    <location>
        <position position="26"/>
    </location>
</feature>
<feature type="site" description="Contributes to redox potential value" evidence="20">
    <location>
        <position position="33"/>
    </location>
</feature>
<feature type="site" description="Contributes to redox potential value" evidence="20">
    <location>
        <position position="34"/>
    </location>
</feature>
<feature type="modified residue" description="N6-acetyllysine" evidence="21">
    <location>
        <position position="3"/>
    </location>
</feature>
<feature type="modified residue" description="N6-succinyllysine" evidence="1">
    <location>
        <position position="8"/>
    </location>
</feature>
<feature type="modified residue" description="N6-acetyllysine" evidence="21">
    <location>
        <position position="39"/>
    </location>
</feature>
<feature type="modified residue" description="S-nitrosocysteine" evidence="8">
    <location>
        <position position="62"/>
    </location>
</feature>
<feature type="modified residue" description="S-nitrosocysteine" evidence="8">
    <location>
        <position position="69"/>
    </location>
</feature>
<feature type="modified residue" description="S-nitrosocysteine; alternate" evidence="6 9">
    <location>
        <position position="73"/>
    </location>
</feature>
<feature type="modified residue" description="N6-acetyllysine; alternate" evidence="1">
    <location>
        <position position="94"/>
    </location>
</feature>
<feature type="modified residue" description="N6-succinyllysine; alternate" evidence="1">
    <location>
        <position position="94"/>
    </location>
</feature>
<feature type="disulfide bond" description="Redox-active" evidence="2 8 13">
    <location>
        <begin position="32"/>
        <end position="35"/>
    </location>
</feature>
<feature type="disulfide bond" description="Interchain; alternate" evidence="8">
    <location>
        <position position="73"/>
    </location>
</feature>
<feature type="splice variant" id="VSP_045607" description="In isoform 2." evidence="19">
    <location>
        <begin position="44"/>
        <end position="63"/>
    </location>
</feature>
<feature type="mutagenesis site" description="Loses its reducing activity, interaction with APEX1 and transcription activation; when associated with S-35." evidence="17">
    <original>C</original>
    <variation>S</variation>
    <location>
        <position position="32"/>
    </location>
</feature>
<feature type="mutagenesis site" description="Loses its reducing activity, interaction with APEX1 and transcription activation; when associated with S-32." evidence="17">
    <original>C</original>
    <variation>S</variation>
    <location>
        <position position="35"/>
    </location>
</feature>
<feature type="mutagenesis site" description="Loss of pH-dependence of dimerization.">
    <original>D</original>
    <variation>N</variation>
    <location>
        <position position="60"/>
    </location>
</feature>
<feature type="mutagenesis site" description="Retains its reducing activity. Retains interaction with APEX1 and transcription activation; when associated with S-69 and S-73." evidence="17">
    <original>C</original>
    <variation>S</variation>
    <location>
        <position position="62"/>
    </location>
</feature>
<feature type="mutagenesis site" description="No effect on reducing activity, interaction with APEX1 and on S-nitrosylation of C-73. Retains interaction with APEX1 and transcription activation; when associated with S-62 and S-73." evidence="9 17">
    <original>C</original>
    <variation>S</variation>
    <location>
        <position position="69"/>
    </location>
</feature>
<feature type="mutagenesis site" description="Strongly reduced interaction with CASP3; when associated with A-72." evidence="9">
    <original>E</original>
    <variation>A</variation>
    <location>
        <position position="70"/>
    </location>
</feature>
<feature type="mutagenesis site" description="Strongly reduced interaction with CASP3; when associated with A-70." evidence="9">
    <original>K</original>
    <variation>A</variation>
    <location>
        <position position="72"/>
    </location>
</feature>
<feature type="mutagenesis site" description="Strongly reduced S-nitrosylation of CASP3." evidence="6 9 17">
    <original>C</original>
    <variation>D</variation>
    <location>
        <position position="73"/>
    </location>
</feature>
<feature type="mutagenesis site" description="Loss of nitrosylation, and loss of S-nitrosylating activity towards CASP3. Retains interaction with APEX1 and transcription activation; when associated with S-62 and S-69." evidence="6 9 17">
    <original>C</original>
    <variation>S</variation>
    <location>
        <position position="73"/>
    </location>
</feature>
<feature type="mutagenesis site" description="Retains its reducing activity." evidence="6 9 17">
    <original>C</original>
    <variation>S</variation>
    <location>
        <position position="73"/>
    </location>
</feature>
<feature type="sequence conflict" description="In Ref. 1; AAA74596 and 4; AAF86466." evidence="20" ref="1 4">
    <original>K</original>
    <variation>N</variation>
    <location>
        <position position="39"/>
    </location>
</feature>
<feature type="sequence conflict" description="In Ref. 1; AAA74596 and 4; AAF86466." evidence="20" ref="1 4">
    <original>M</original>
    <variation>T</variation>
    <location>
        <position position="74"/>
    </location>
</feature>
<feature type="strand" evidence="22">
    <location>
        <begin position="3"/>
        <end position="5"/>
    </location>
</feature>
<feature type="helix" evidence="24">
    <location>
        <begin position="8"/>
        <end position="17"/>
    </location>
</feature>
<feature type="turn" evidence="24">
    <location>
        <begin position="18"/>
        <end position="20"/>
    </location>
</feature>
<feature type="strand" evidence="24">
    <location>
        <begin position="23"/>
        <end position="28"/>
    </location>
</feature>
<feature type="strand" evidence="25">
    <location>
        <begin position="30"/>
        <end position="32"/>
    </location>
</feature>
<feature type="helix" evidence="24">
    <location>
        <begin position="33"/>
        <end position="48"/>
    </location>
</feature>
<feature type="turn" evidence="23">
    <location>
        <begin position="49"/>
        <end position="51"/>
    </location>
</feature>
<feature type="strand" evidence="24">
    <location>
        <begin position="52"/>
        <end position="58"/>
    </location>
</feature>
<feature type="turn" evidence="24">
    <location>
        <begin position="59"/>
        <end position="62"/>
    </location>
</feature>
<feature type="helix" evidence="24">
    <location>
        <begin position="63"/>
        <end position="69"/>
    </location>
</feature>
<feature type="strand" evidence="24">
    <location>
        <begin position="73"/>
        <end position="81"/>
    </location>
</feature>
<feature type="strand" evidence="24">
    <location>
        <begin position="84"/>
        <end position="91"/>
    </location>
</feature>
<feature type="helix" evidence="24">
    <location>
        <begin position="94"/>
        <end position="104"/>
    </location>
</feature>
<gene>
    <name type="primary">TXN</name>
    <name type="synonym">TRDX</name>
    <name type="synonym">TRX</name>
    <name type="synonym">TRX1</name>
</gene>
<comment type="function">
    <text evidence="3 6 7 9 10 15 17">Participates in various redox reactions through the reversible oxidation of its active center dithiol to a disulfide and catalyzes dithiol-disulfide exchange reactions (PubMed:17182577, PubMed:19032234, PubMed:2176490). Plays a role in the reversible S-nitrosylation of cysteine residues in target proteins, and thereby contributes to the response to intracellular nitric oxide. Nitrosylates the active site Cys of CASP3 in response to nitric oxide (NO), and thereby inhibits caspase-3 activity (PubMed:16408020, PubMed:17606900). Induces the FOS/JUN AP-1 DNA-binding activity in ionizing radiation (IR) cells through its oxidation/reduction status and stimulates AP-1 transcriptional activity (PubMed:11118054, PubMed:9108029).</text>
</comment>
<comment type="function">
    <text>ADF augments the expression of the interleukin-2 receptor TAC (IL2R/P55).</text>
</comment>
<comment type="subunit">
    <text evidence="5 8 11 17 18">Homodimer; disulfide-linked (PubMed:17260951, PubMed:9369469). Interacts with TXNIP through the redox-active site (PubMed:17260951). Interacts with MAP3K5 and CASP3 (PubMed:15246877). In case of infection, interacts with S.typhimurium protein slrP (PubMed:19690162). Interacts with APEX1; the interaction stimulates the FOS/JUN AP-1 DNA-binding activity in a redox-dependent manner (PubMed:9108029).</text>
</comment>
<comment type="interaction">
    <interactant intactId="EBI-594644">
        <id>P10599</id>
    </interactant>
    <interactant intactId="EBI-640741">
        <id>P01023</id>
        <label>A2M</label>
    </interactant>
    <organismsDiffer>false</organismsDiffer>
    <experiments>3</experiments>
</comment>
<comment type="interaction">
    <interactant intactId="EBI-594644">
        <id>P10599</id>
    </interactant>
    <interactant intactId="EBI-351710">
        <id>P12814</id>
        <label>ACTN1</label>
    </interactant>
    <organismsDiffer>false</organismsDiffer>
    <experiments>3</experiments>
</comment>
<comment type="interaction">
    <interactant intactId="EBI-594644">
        <id>P10599</id>
    </interactant>
    <interactant intactId="EBI-296087">
        <id>P31749</id>
        <label>AKT1</label>
    </interactant>
    <organismsDiffer>false</organismsDiffer>
    <experiments>3</experiments>
</comment>
<comment type="interaction">
    <interactant intactId="EBI-594644">
        <id>P10599</id>
    </interactant>
    <interactant intactId="EBI-17183751">
        <id>X5D778</id>
        <label>ANKRD11</label>
    </interactant>
    <organismsDiffer>false</organismsDiffer>
    <experiments>6</experiments>
</comment>
<comment type="interaction">
    <interactant intactId="EBI-594644">
        <id>P10599</id>
    </interactant>
    <interactant intactId="EBI-12275524">
        <id>P23560-2</id>
        <label>BDNF</label>
    </interactant>
    <organismsDiffer>false</organismsDiffer>
    <experiments>3</experiments>
</comment>
<comment type="interaction">
    <interactant intactId="EBI-594644">
        <id>P10599</id>
    </interactant>
    <interactant intactId="EBI-524064">
        <id>P42574</id>
        <label>CASP3</label>
    </interactant>
    <organismsDiffer>false</organismsDiffer>
    <experiments>6</experiments>
</comment>
<comment type="interaction">
    <interactant intactId="EBI-594644">
        <id>P10599</id>
    </interactant>
    <interactant intactId="EBI-594661">
        <id>Q92905</id>
        <label>COPS5</label>
    </interactant>
    <organismsDiffer>false</organismsDiffer>
    <experiments>9</experiments>
</comment>
<comment type="interaction">
    <interactant intactId="EBI-594644">
        <id>P10599</id>
    </interactant>
    <interactant intactId="EBI-742054">
        <id>Q96D03</id>
        <label>DDIT4L</label>
    </interactant>
    <organismsDiffer>false</organismsDiffer>
    <experiments>5</experiments>
</comment>
<comment type="interaction">
    <interactant intactId="EBI-594644">
        <id>P10599</id>
    </interactant>
    <interactant intactId="EBI-10976677">
        <id>G5E9A7</id>
        <label>DMWD</label>
    </interactant>
    <organismsDiffer>false</organismsDiffer>
    <experiments>3</experiments>
</comment>
<comment type="interaction">
    <interactant intactId="EBI-594644">
        <id>P10599</id>
    </interactant>
    <interactant intactId="EBI-10968534">
        <id>P50570-2</id>
        <label>DNM2</label>
    </interactant>
    <organismsDiffer>false</organismsDiffer>
    <experiments>3</experiments>
</comment>
<comment type="interaction">
    <interactant intactId="EBI-594644">
        <id>P10599</id>
    </interactant>
    <interactant intactId="EBI-297353">
        <id>P00533</id>
        <label>EGFR</label>
    </interactant>
    <organismsDiffer>false</organismsDiffer>
    <experiments>5</experiments>
</comment>
<comment type="interaction">
    <interactant intactId="EBI-594644">
        <id>P10599</id>
    </interactant>
    <interactant intactId="EBI-1571188">
        <id>P19883</id>
        <label>FST</label>
    </interactant>
    <organismsDiffer>false</organismsDiffer>
    <experiments>3</experiments>
</comment>
<comment type="interaction">
    <interactant intactId="EBI-594644">
        <id>P10599</id>
    </interactant>
    <interactant intactId="EBI-354056">
        <id>P04406</id>
        <label>GAPDH</label>
    </interactant>
    <organismsDiffer>false</organismsDiffer>
    <experiments>3</experiments>
</comment>
<comment type="interaction">
    <interactant intactId="EBI-594644">
        <id>P10599</id>
    </interactant>
    <interactant intactId="EBI-744302">
        <id>P14136</id>
        <label>GFAP</label>
    </interactant>
    <organismsDiffer>false</organismsDiffer>
    <experiments>3</experiments>
</comment>
<comment type="interaction">
    <interactant intactId="EBI-594644">
        <id>P10599</id>
    </interactant>
    <interactant intactId="EBI-296047">
        <id>P07900</id>
        <label>HSP90AA1</label>
    </interactant>
    <organismsDiffer>false</organismsDiffer>
    <experiments>3</experiments>
</comment>
<comment type="interaction">
    <interactant intactId="EBI-594644">
        <id>P10599</id>
    </interactant>
    <interactant intactId="EBI-1055254">
        <id>Q8WXH2</id>
        <label>JPH3</label>
    </interactant>
    <organismsDiffer>false</organismsDiffer>
    <experiments>3</experiments>
</comment>
<comment type="interaction">
    <interactant intactId="EBI-594644">
        <id>P10599</id>
    </interactant>
    <interactant intactId="EBI-25832196">
        <id>Q14114-3</id>
        <label>LRP8</label>
    </interactant>
    <organismsDiffer>false</organismsDiffer>
    <experiments>3</experiments>
</comment>
<comment type="interaction">
    <interactant intactId="EBI-594644">
        <id>P10599</id>
    </interactant>
    <interactant intactId="EBI-476263">
        <id>Q99683</id>
        <label>MAP3K5</label>
    </interactant>
    <organismsDiffer>false</organismsDiffer>
    <experiments>4</experiments>
</comment>
<comment type="interaction">
    <interactant intactId="EBI-594644">
        <id>P10599</id>
    </interactant>
    <interactant intactId="EBI-1189067">
        <id>P51608</id>
        <label>MECP2</label>
    </interactant>
    <organismsDiffer>false</organismsDiffer>
    <experiments>3</experiments>
</comment>
<comment type="interaction">
    <interactant intactId="EBI-594644">
        <id>P10599</id>
    </interactant>
    <interactant intactId="EBI-995714">
        <id>Q9Y605</id>
        <label>MRFAP1</label>
    </interactant>
    <organismsDiffer>false</organismsDiffer>
    <experiments>3</experiments>
</comment>
<comment type="interaction">
    <interactant intactId="EBI-594644">
        <id>P10599</id>
    </interactant>
    <interactant intactId="EBI-447677">
        <id>Q99836</id>
        <label>MYD88</label>
    </interactant>
    <organismsDiffer>false</organismsDiffer>
    <experiments>4</experiments>
</comment>
<comment type="interaction">
    <interactant intactId="EBI-594644">
        <id>P10599</id>
    </interactant>
    <interactant intactId="EBI-713665">
        <id>P19404</id>
        <label>NDUFV2</label>
    </interactant>
    <organismsDiffer>false</organismsDiffer>
    <experiments>3</experiments>
</comment>
<comment type="interaction">
    <interactant intactId="EBI-594644">
        <id>P10599</id>
    </interactant>
    <interactant intactId="EBI-740897">
        <id>Q9GZT8</id>
        <label>NIF3L1</label>
    </interactant>
    <organismsDiffer>false</organismsDiffer>
    <experiments>3</experiments>
</comment>
<comment type="interaction">
    <interactant intactId="EBI-594644">
        <id>P10599</id>
    </interactant>
    <interactant intactId="EBI-347978">
        <id>P37198</id>
        <label>NUP62</label>
    </interactant>
    <organismsDiffer>false</organismsDiffer>
    <experiments>3</experiments>
</comment>
<comment type="interaction">
    <interactant intactId="EBI-594644">
        <id>P10599</id>
    </interactant>
    <interactant intactId="EBI-1266300">
        <id>P32119</id>
        <label>PRDX2</label>
    </interactant>
    <organismsDiffer>false</organismsDiffer>
    <experiments>2</experiments>
</comment>
<comment type="interaction">
    <interactant intactId="EBI-594644">
        <id>P10599</id>
    </interactant>
    <interactant intactId="EBI-968788">
        <id>P18031</id>
        <label>PTPN1</label>
    </interactant>
    <organismsDiffer>false</organismsDiffer>
    <experiments>2</experiments>
</comment>
<comment type="interaction">
    <interactant intactId="EBI-594644">
        <id>P10599</id>
    </interactant>
    <interactant intactId="EBI-748621">
        <id>Q9UJW9</id>
        <label>SERTAD3</label>
    </interactant>
    <organismsDiffer>false</organismsDiffer>
    <experiments>3</experiments>
</comment>
<comment type="interaction">
    <interactant intactId="EBI-594644">
        <id>P10599</id>
    </interactant>
    <interactant intactId="EBI-742688">
        <id>Q9NZD8</id>
        <label>SPG21</label>
    </interactant>
    <organismsDiffer>false</organismsDiffer>
    <experiments>6</experiments>
</comment>
<comment type="interaction">
    <interactant intactId="EBI-594644">
        <id>P10599</id>
    </interactant>
    <interactant intactId="EBI-5235340">
        <id>Q7Z699</id>
        <label>SPRED1</label>
    </interactant>
    <organismsDiffer>false</organismsDiffer>
    <experiments>3</experiments>
</comment>
<comment type="interaction">
    <interactant intactId="EBI-594644">
        <id>P10599</id>
    </interactant>
    <interactant intactId="EBI-10301068">
        <id>Q9BXU3</id>
        <label>TEX13A</label>
    </interactant>
    <organismsDiffer>false</organismsDiffer>
    <experiments>3</experiments>
</comment>
<comment type="interaction">
    <interactant intactId="EBI-594644">
        <id>P10599</id>
    </interactant>
    <interactant intactId="EBI-355744">
        <id>Q12933</id>
        <label>TRAF2</label>
    </interactant>
    <organismsDiffer>false</organismsDiffer>
    <experiments>3</experiments>
</comment>
<comment type="interaction">
    <interactant intactId="EBI-594644">
        <id>P10599</id>
    </interactant>
    <interactant intactId="EBI-1369170">
        <id>Q9H3M7</id>
        <label>TXNIP</label>
    </interactant>
    <organismsDiffer>false</organismsDiffer>
    <experiments>8</experiments>
</comment>
<comment type="interaction">
    <interactant intactId="EBI-594644">
        <id>P10599</id>
    </interactant>
    <interactant intactId="EBI-10762386">
        <id>D0ZRB2</id>
        <label>slrP</label>
    </interactant>
    <organismsDiffer>true</organismsDiffer>
    <experiments>7</experiments>
</comment>
<comment type="subcellular location">
    <subcellularLocation>
        <location evidence="3 17">Nucleus</location>
    </subcellularLocation>
    <subcellularLocation>
        <location evidence="3 17">Cytoplasm</location>
    </subcellularLocation>
    <subcellularLocation>
        <location evidence="4">Secreted</location>
    </subcellularLocation>
    <text evidence="3 4 17">Translocates from the cytoplasm into the nucleus after phorbol 12-myristate 13-acetate induction (PMA) (PubMed:9108029). Predominantly in the cytoplasm in non irradiated cells (PubMed:11118054). Radiation induces translocation of TRX from the cytoplasm to the nucleus (PubMed:11118054). Secreted by a leaderless secretory pathway (PubMed:1332947).</text>
</comment>
<comment type="alternative products">
    <event type="alternative splicing"/>
    <isoform>
        <id>P10599-1</id>
        <name>1</name>
        <sequence type="displayed"/>
    </isoform>
    <isoform>
        <id>P10599-2</id>
        <name>2</name>
        <sequence type="described" ref="VSP_045607"/>
    </isoform>
</comment>
<comment type="induction">
    <text evidence="3">Up-regulated by ionizing radiation.</text>
</comment>
<comment type="PTM">
    <text evidence="5 6 8 9">In the fully reduced protein, both Cys-69 and Cys-73 are nitrosylated in response to nitric oxide (NO). When two disulfide bonds are present in the protein, only Cys-73 is nitrosylated. Cys-73 can serve as donor for nitrosylation of target proteins.</text>
</comment>
<comment type="PTM">
    <text evidence="11">In case of infection, ubiquitinated by S.typhimurium protein slrP, leading to its degradation.</text>
</comment>
<comment type="allergen">
    <text evidence="7 10 14">Causes an allergic reaction in human (PubMed:17182577, PubMed:19032234, PubMed:21489611). Recombinant protein binds to IgE in atopic eczema-suffering patients allergic to opportunistic skin-colonizing yeast M.sympodialis. Intermediate cross-reactivity is detected between the recombinant thioredoxin from M.sympodialis (Mala s 13) and recombinant form of this protein. Skin-prick test (SPT) and atopy patch test (APT) with 5 patients confirm cross-reactivity between the two proteins (PubMed:17182577). Recombinant protein binds to IgE of patients suffering from allergic bronchopulmonary aspergillosis (ABPA) and cross-reacts extensively with recombinant thioredoxin proteins from A.fumigatus (Asp f 28 and Asp f 29) and Mala s 13. Causes a positive skin reaction and induces proliferation of the human peripheral blood mononuclear cells in ABPA patients allergic to this protein. Acts as an IgE-binding self-antigen in ABPA patients allergic to fungal thioredoxin (PubMed:19032234). In atopic dermatitis (AD)-suffering patients allergic to M.sympodialis, a cross-reactivity between Mala s 13 and this protein can be detected in T-cells of the peripheral blood and skin. Keratinocytes stimulated by interferon (IFN)-alpha and tumor necrosis factor (TNF)-alpha release thioredoxin, which then becomes available for cross-reactivity with Mala s 13-specific T cells. The autoreactive T cells identified include T-helper 1 (Th1), T-helper 2 (Th2), T-helper 17 (Th17) and T-helper 22 (Th22) phenotypes. Skinhoming T cells autoreactive to this protein may be relevant for cutaneous inflammation in patients with AD (PubMed:21489611).</text>
</comment>
<comment type="similarity">
    <text evidence="20">Belongs to the thioredoxin family.</text>
</comment>
<comment type="online information" name="Atlas of Genetics and Cytogenetics in Oncology and Haematology">
    <link uri="https://atlasgeneticsoncology.org/gene/44354/TXN"/>
</comment>